<feature type="chain" id="PRO_1000191099" description="Multidrug resistance protein MdtK">
    <location>
        <begin position="1"/>
        <end position="457"/>
    </location>
</feature>
<feature type="transmembrane region" description="Helical" evidence="1">
    <location>
        <begin position="11"/>
        <end position="31"/>
    </location>
</feature>
<feature type="transmembrane region" description="Helical" evidence="1">
    <location>
        <begin position="53"/>
        <end position="73"/>
    </location>
</feature>
<feature type="transmembrane region" description="Helical" evidence="1">
    <location>
        <begin position="93"/>
        <end position="113"/>
    </location>
</feature>
<feature type="transmembrane region" description="Helical" evidence="1">
    <location>
        <begin position="127"/>
        <end position="147"/>
    </location>
</feature>
<feature type="transmembrane region" description="Helical" evidence="1">
    <location>
        <begin position="160"/>
        <end position="180"/>
    </location>
</feature>
<feature type="transmembrane region" description="Helical" evidence="1">
    <location>
        <begin position="188"/>
        <end position="208"/>
    </location>
</feature>
<feature type="transmembrane region" description="Helical" evidence="1">
    <location>
        <begin position="243"/>
        <end position="263"/>
    </location>
</feature>
<feature type="transmembrane region" description="Helical" evidence="1">
    <location>
        <begin position="276"/>
        <end position="296"/>
    </location>
</feature>
<feature type="transmembrane region" description="Helical" evidence="1">
    <location>
        <begin position="316"/>
        <end position="336"/>
    </location>
</feature>
<feature type="transmembrane region" description="Helical" evidence="1">
    <location>
        <begin position="357"/>
        <end position="377"/>
    </location>
</feature>
<feature type="transmembrane region" description="Helical" evidence="1">
    <location>
        <begin position="387"/>
        <end position="407"/>
    </location>
</feature>
<feature type="transmembrane region" description="Helical" evidence="1">
    <location>
        <begin position="416"/>
        <end position="436"/>
    </location>
</feature>
<protein>
    <recommendedName>
        <fullName evidence="1">Multidrug resistance protein MdtK</fullName>
    </recommendedName>
    <alternativeName>
        <fullName evidence="1">Multidrug-efflux transporter</fullName>
    </alternativeName>
</protein>
<dbReference type="EMBL" id="AM942759">
    <property type="protein sequence ID" value="CAR42965.1"/>
    <property type="molecule type" value="Genomic_DNA"/>
</dbReference>
<dbReference type="RefSeq" id="WP_004248167.1">
    <property type="nucleotide sequence ID" value="NC_010554.1"/>
</dbReference>
<dbReference type="SMR" id="B4EWN4"/>
<dbReference type="EnsemblBacteria" id="CAR42965">
    <property type="protein sequence ID" value="CAR42965"/>
    <property type="gene ID" value="PMI1404"/>
</dbReference>
<dbReference type="GeneID" id="6802407"/>
<dbReference type="KEGG" id="pmr:PMI1404"/>
<dbReference type="eggNOG" id="COG0534">
    <property type="taxonomic scope" value="Bacteria"/>
</dbReference>
<dbReference type="HOGENOM" id="CLU_012893_6_0_6"/>
<dbReference type="Proteomes" id="UP000008319">
    <property type="component" value="Chromosome"/>
</dbReference>
<dbReference type="GO" id="GO:0005886">
    <property type="term" value="C:plasma membrane"/>
    <property type="evidence" value="ECO:0007669"/>
    <property type="project" value="UniProtKB-SubCell"/>
</dbReference>
<dbReference type="GO" id="GO:0015297">
    <property type="term" value="F:antiporter activity"/>
    <property type="evidence" value="ECO:0007669"/>
    <property type="project" value="UniProtKB-UniRule"/>
</dbReference>
<dbReference type="GO" id="GO:0042910">
    <property type="term" value="F:xenobiotic transmembrane transporter activity"/>
    <property type="evidence" value="ECO:0007669"/>
    <property type="project" value="UniProtKB-UniRule"/>
</dbReference>
<dbReference type="GO" id="GO:0006814">
    <property type="term" value="P:sodium ion transport"/>
    <property type="evidence" value="ECO:0007669"/>
    <property type="project" value="UniProtKB-UniRule"/>
</dbReference>
<dbReference type="GO" id="GO:0006855">
    <property type="term" value="P:xenobiotic transmembrane transport"/>
    <property type="evidence" value="ECO:0007669"/>
    <property type="project" value="UniProtKB-UniRule"/>
</dbReference>
<dbReference type="CDD" id="cd13131">
    <property type="entry name" value="MATE_NorM_like"/>
    <property type="match status" value="1"/>
</dbReference>
<dbReference type="HAMAP" id="MF_00400">
    <property type="entry name" value="MdtK"/>
    <property type="match status" value="1"/>
</dbReference>
<dbReference type="InterPro" id="IPR002528">
    <property type="entry name" value="MATE_fam"/>
</dbReference>
<dbReference type="InterPro" id="IPR050222">
    <property type="entry name" value="MATE_MdtK"/>
</dbReference>
<dbReference type="InterPro" id="IPR048279">
    <property type="entry name" value="MdtK-like"/>
</dbReference>
<dbReference type="InterPro" id="IPR022913">
    <property type="entry name" value="Multidrug-R_MdtK"/>
</dbReference>
<dbReference type="NCBIfam" id="TIGR00797">
    <property type="entry name" value="matE"/>
    <property type="match status" value="1"/>
</dbReference>
<dbReference type="PANTHER" id="PTHR43298:SF2">
    <property type="entry name" value="FMN_FAD EXPORTER YEEO-RELATED"/>
    <property type="match status" value="1"/>
</dbReference>
<dbReference type="PANTHER" id="PTHR43298">
    <property type="entry name" value="MULTIDRUG RESISTANCE PROTEIN NORM-RELATED"/>
    <property type="match status" value="1"/>
</dbReference>
<dbReference type="Pfam" id="PF01554">
    <property type="entry name" value="MatE"/>
    <property type="match status" value="2"/>
</dbReference>
<dbReference type="PIRSF" id="PIRSF006603">
    <property type="entry name" value="DinF"/>
    <property type="match status" value="1"/>
</dbReference>
<keyword id="KW-0050">Antiport</keyword>
<keyword id="KW-0997">Cell inner membrane</keyword>
<keyword id="KW-1003">Cell membrane</keyword>
<keyword id="KW-0406">Ion transport</keyword>
<keyword id="KW-0472">Membrane</keyword>
<keyword id="KW-1185">Reference proteome</keyword>
<keyword id="KW-0915">Sodium</keyword>
<keyword id="KW-0739">Sodium transport</keyword>
<keyword id="KW-0812">Transmembrane</keyword>
<keyword id="KW-1133">Transmembrane helix</keyword>
<keyword id="KW-0813">Transport</keyword>
<comment type="function">
    <text evidence="1">Multidrug efflux pump that functions probably as a Na(+)/drug antiporter.</text>
</comment>
<comment type="subcellular location">
    <subcellularLocation>
        <location evidence="1">Cell inner membrane</location>
        <topology evidence="1">Multi-pass membrane protein</topology>
    </subcellularLocation>
</comment>
<comment type="similarity">
    <text evidence="1">Belongs to the multi antimicrobial extrusion (MATE) (TC 2.A.66.1) family. MdtK subfamily.</text>
</comment>
<name>MDTK_PROMH</name>
<gene>
    <name evidence="1" type="primary">mdtK</name>
    <name type="ordered locus">PMI1404</name>
</gene>
<sequence length="457" mass="50030">MQKYIKEARSLLALGIPVIIAQFSQTAMGVVDTVMAGAVNATEMSAVAVGTSIWLPTILLGQGILMALTPIVAQLNGSGQRKHIANRTQQGFWLATFLSIMVIAILYNSRFIIEAQHDIEPELAEKAIGFIHAIMWGAPGCLYYQVLRSQCEGLSKTKPGMIIGFIGLLINIPVNYAFIYGKFGAPQLGGIGCGVATASVFWAMFLMMRYYVRRAPTQRDVMPKKRLVLPEFHTIKRITLLGLPVGLALFFEVTLFAVVALLVSPLGVTAVASHQIALNFSSLMFMFPLSLGIAATIRVGYNLGQRSTEQARTSAITALAVGLMLASCTAIFSIIFREKIALMYNDNIEVVTLASHLMLFAALYQLSDSVQVIGSGVLRGYKDTRSIFFITFIAYWVIGLPSGYLLGRTDYIVEAMGPAGFWIGFILGLTASAIMMGTRIWWIQRQSDEVVLLRSER</sequence>
<reference key="1">
    <citation type="journal article" date="2008" name="J. Bacteriol.">
        <title>Complete genome sequence of uropathogenic Proteus mirabilis, a master of both adherence and motility.</title>
        <authorList>
            <person name="Pearson M.M."/>
            <person name="Sebaihia M."/>
            <person name="Churcher C."/>
            <person name="Quail M.A."/>
            <person name="Seshasayee A.S."/>
            <person name="Luscombe N.M."/>
            <person name="Abdellah Z."/>
            <person name="Arrosmith C."/>
            <person name="Atkin B."/>
            <person name="Chillingworth T."/>
            <person name="Hauser H."/>
            <person name="Jagels K."/>
            <person name="Moule S."/>
            <person name="Mungall K."/>
            <person name="Norbertczak H."/>
            <person name="Rabbinowitsch E."/>
            <person name="Walker D."/>
            <person name="Whithead S."/>
            <person name="Thomson N.R."/>
            <person name="Rather P.N."/>
            <person name="Parkhill J."/>
            <person name="Mobley H.L.T."/>
        </authorList>
    </citation>
    <scope>NUCLEOTIDE SEQUENCE [LARGE SCALE GENOMIC DNA]</scope>
    <source>
        <strain>HI4320</strain>
    </source>
</reference>
<evidence type="ECO:0000255" key="1">
    <source>
        <dbReference type="HAMAP-Rule" id="MF_00400"/>
    </source>
</evidence>
<proteinExistence type="inferred from homology"/>
<organism>
    <name type="scientific">Proteus mirabilis (strain HI4320)</name>
    <dbReference type="NCBI Taxonomy" id="529507"/>
    <lineage>
        <taxon>Bacteria</taxon>
        <taxon>Pseudomonadati</taxon>
        <taxon>Pseudomonadota</taxon>
        <taxon>Gammaproteobacteria</taxon>
        <taxon>Enterobacterales</taxon>
        <taxon>Morganellaceae</taxon>
        <taxon>Proteus</taxon>
    </lineage>
</organism>
<accession>B4EWN4</accession>